<gene>
    <name evidence="1" type="primary">cinA</name>
    <name type="ordered locus">SPG_1850</name>
</gene>
<comment type="similarity">
    <text evidence="1">Belongs to the CinA family.</text>
</comment>
<reference key="1">
    <citation type="journal article" date="2001" name="Microb. Drug Resist.">
        <title>Annotated draft genomic sequence from a Streptococcus pneumoniae type 19F clinical isolate.</title>
        <authorList>
            <person name="Dopazo J."/>
            <person name="Mendoza A."/>
            <person name="Herrero J."/>
            <person name="Caldara F."/>
            <person name="Humbert Y."/>
            <person name="Friedli L."/>
            <person name="Guerrier M."/>
            <person name="Grand-Schenk E."/>
            <person name="Gandin C."/>
            <person name="de Francesco M."/>
            <person name="Polissi A."/>
            <person name="Buell G."/>
            <person name="Feger G."/>
            <person name="Garcia E."/>
            <person name="Peitsch M."/>
            <person name="Garcia-Bustos J.F."/>
        </authorList>
    </citation>
    <scope>NUCLEOTIDE SEQUENCE [LARGE SCALE GENOMIC DNA]</scope>
    <source>
        <strain>G54</strain>
    </source>
</reference>
<reference key="2">
    <citation type="submission" date="2008-03" db="EMBL/GenBank/DDBJ databases">
        <title>Pneumococcal beta glucoside metabolism investigated by whole genome comparison.</title>
        <authorList>
            <person name="Mulas L."/>
            <person name="Trappetti C."/>
            <person name="Hakenbeck R."/>
            <person name="Iannelli F."/>
            <person name="Pozzi G."/>
            <person name="Davidsen T.M."/>
            <person name="Tettelin H."/>
            <person name="Oggioni M."/>
        </authorList>
    </citation>
    <scope>NUCLEOTIDE SEQUENCE [LARGE SCALE GENOMIC DNA]</scope>
    <source>
        <strain>G54</strain>
    </source>
</reference>
<name>CINA_STRP4</name>
<organism>
    <name type="scientific">Streptococcus pneumoniae serotype 19F (strain G54)</name>
    <dbReference type="NCBI Taxonomy" id="512566"/>
    <lineage>
        <taxon>Bacteria</taxon>
        <taxon>Bacillati</taxon>
        <taxon>Bacillota</taxon>
        <taxon>Bacilli</taxon>
        <taxon>Lactobacillales</taxon>
        <taxon>Streptococcaceae</taxon>
        <taxon>Streptococcus</taxon>
    </lineage>
</organism>
<evidence type="ECO:0000255" key="1">
    <source>
        <dbReference type="HAMAP-Rule" id="MF_00226"/>
    </source>
</evidence>
<accession>B5E2E1</accession>
<feature type="chain" id="PRO_1000100335" description="Putative competence-damage inducible protein">
    <location>
        <begin position="1"/>
        <end position="418"/>
    </location>
</feature>
<proteinExistence type="inferred from homology"/>
<dbReference type="EMBL" id="CP001015">
    <property type="protein sequence ID" value="ACF56549.1"/>
    <property type="molecule type" value="Genomic_DNA"/>
</dbReference>
<dbReference type="SMR" id="B5E2E1"/>
<dbReference type="KEGG" id="spx:SPG_1850"/>
<dbReference type="HOGENOM" id="CLU_030805_9_3_9"/>
<dbReference type="CDD" id="cd00885">
    <property type="entry name" value="cinA"/>
    <property type="match status" value="1"/>
</dbReference>
<dbReference type="Gene3D" id="3.30.70.2860">
    <property type="match status" value="1"/>
</dbReference>
<dbReference type="Gene3D" id="3.90.950.20">
    <property type="entry name" value="CinA-like"/>
    <property type="match status" value="1"/>
</dbReference>
<dbReference type="Gene3D" id="3.40.980.10">
    <property type="entry name" value="MoaB/Mog-like domain"/>
    <property type="match status" value="1"/>
</dbReference>
<dbReference type="HAMAP" id="MF_00226_B">
    <property type="entry name" value="CinA_B"/>
    <property type="match status" value="1"/>
</dbReference>
<dbReference type="InterPro" id="IPR050101">
    <property type="entry name" value="CinA"/>
</dbReference>
<dbReference type="InterPro" id="IPR036653">
    <property type="entry name" value="CinA-like_C"/>
</dbReference>
<dbReference type="InterPro" id="IPR008136">
    <property type="entry name" value="CinA_C"/>
</dbReference>
<dbReference type="InterPro" id="IPR041424">
    <property type="entry name" value="CinA_KH"/>
</dbReference>
<dbReference type="InterPro" id="IPR008135">
    <property type="entry name" value="Competence-induced_CinA"/>
</dbReference>
<dbReference type="InterPro" id="IPR036425">
    <property type="entry name" value="MoaB/Mog-like_dom_sf"/>
</dbReference>
<dbReference type="InterPro" id="IPR001453">
    <property type="entry name" value="MoaB/Mog_dom"/>
</dbReference>
<dbReference type="NCBIfam" id="TIGR00200">
    <property type="entry name" value="cinA_nterm"/>
    <property type="match status" value="1"/>
</dbReference>
<dbReference type="NCBIfam" id="TIGR00199">
    <property type="entry name" value="PncC_domain"/>
    <property type="match status" value="1"/>
</dbReference>
<dbReference type="NCBIfam" id="NF001813">
    <property type="entry name" value="PRK00549.1"/>
    <property type="match status" value="1"/>
</dbReference>
<dbReference type="PANTHER" id="PTHR13939">
    <property type="entry name" value="NICOTINAMIDE-NUCLEOTIDE AMIDOHYDROLASE PNCC"/>
    <property type="match status" value="1"/>
</dbReference>
<dbReference type="PANTHER" id="PTHR13939:SF0">
    <property type="entry name" value="NMN AMIDOHYDROLASE-LIKE PROTEIN YFAY"/>
    <property type="match status" value="1"/>
</dbReference>
<dbReference type="Pfam" id="PF02464">
    <property type="entry name" value="CinA"/>
    <property type="match status" value="1"/>
</dbReference>
<dbReference type="Pfam" id="PF18146">
    <property type="entry name" value="CinA_KH"/>
    <property type="match status" value="1"/>
</dbReference>
<dbReference type="Pfam" id="PF00994">
    <property type="entry name" value="MoCF_biosynth"/>
    <property type="match status" value="1"/>
</dbReference>
<dbReference type="PIRSF" id="PIRSF006728">
    <property type="entry name" value="CinA"/>
    <property type="match status" value="1"/>
</dbReference>
<dbReference type="SMART" id="SM00852">
    <property type="entry name" value="MoCF_biosynth"/>
    <property type="match status" value="1"/>
</dbReference>
<dbReference type="SUPFAM" id="SSF142433">
    <property type="entry name" value="CinA-like"/>
    <property type="match status" value="1"/>
</dbReference>
<dbReference type="SUPFAM" id="SSF53218">
    <property type="entry name" value="Molybdenum cofactor biosynthesis proteins"/>
    <property type="match status" value="1"/>
</dbReference>
<sequence length="418" mass="45089">MKAEIIAVGTEILTGQIVNTNAQFLSEKLAEIGVDVYFQTAVGDNEVRLLSLLEIASQRSSLVILTGGLGPTEDDLTKQTLAKFLGKALVFDPQAQEKLDIFFALRPDYARTPNNERQAQIVEGAIPLPNETGLAVGGKLEVDGVTYVVLPGPPSELKPMVLNQLLPKLMTGNKLYSRVLRFFGIGESQLVTILADLIDNQIDPTLAPYAKTGEVTLRLSTKASSQEEANQALDILENQILDCQTFEGISLRDFCYGYGEETSLASIVVEELKRQGKTIAAAESLTAGLFQATVANFSGVSSIFEGGFVTYSLEEKSRMLDIPAKNLEEHGVVSEFTAQKMAEQARSKTQSDFGISLTGVAGPDSLEGHPVGTVFIGLAQDQGTEVIKVNIGGRSRADVRHIAVMHAFNLVRKALLSD</sequence>
<protein>
    <recommendedName>
        <fullName evidence="1">Putative competence-damage inducible protein</fullName>
    </recommendedName>
</protein>